<proteinExistence type="inferred from homology"/>
<evidence type="ECO:0000255" key="1">
    <source>
        <dbReference type="HAMAP-Rule" id="MF_00453"/>
    </source>
</evidence>
<dbReference type="EC" id="4.1.1.49" evidence="1"/>
<dbReference type="EMBL" id="CP000446">
    <property type="protein sequence ID" value="ABI37233.1"/>
    <property type="molecule type" value="Genomic_DNA"/>
</dbReference>
<dbReference type="RefSeq" id="WP_011620985.1">
    <property type="nucleotide sequence ID" value="NC_008321.1"/>
</dbReference>
<dbReference type="SMR" id="Q0HNY4"/>
<dbReference type="KEGG" id="she:Shewmr4_0152"/>
<dbReference type="HOGENOM" id="CLU_018247_0_1_6"/>
<dbReference type="UniPathway" id="UPA00138"/>
<dbReference type="GO" id="GO:0005829">
    <property type="term" value="C:cytosol"/>
    <property type="evidence" value="ECO:0007669"/>
    <property type="project" value="TreeGrafter"/>
</dbReference>
<dbReference type="GO" id="GO:0005524">
    <property type="term" value="F:ATP binding"/>
    <property type="evidence" value="ECO:0007669"/>
    <property type="project" value="UniProtKB-UniRule"/>
</dbReference>
<dbReference type="GO" id="GO:0046872">
    <property type="term" value="F:metal ion binding"/>
    <property type="evidence" value="ECO:0007669"/>
    <property type="project" value="UniProtKB-KW"/>
</dbReference>
<dbReference type="GO" id="GO:0004612">
    <property type="term" value="F:phosphoenolpyruvate carboxykinase (ATP) activity"/>
    <property type="evidence" value="ECO:0007669"/>
    <property type="project" value="UniProtKB-UniRule"/>
</dbReference>
<dbReference type="GO" id="GO:0006094">
    <property type="term" value="P:gluconeogenesis"/>
    <property type="evidence" value="ECO:0007669"/>
    <property type="project" value="UniProtKB-UniRule"/>
</dbReference>
<dbReference type="CDD" id="cd00484">
    <property type="entry name" value="PEPCK_ATP"/>
    <property type="match status" value="1"/>
</dbReference>
<dbReference type="FunFam" id="2.170.8.10:FF:000001">
    <property type="entry name" value="Phosphoenolpyruvate carboxykinase (ATP)"/>
    <property type="match status" value="1"/>
</dbReference>
<dbReference type="Gene3D" id="3.90.228.20">
    <property type="match status" value="1"/>
</dbReference>
<dbReference type="Gene3D" id="3.40.449.10">
    <property type="entry name" value="Phosphoenolpyruvate Carboxykinase, domain 1"/>
    <property type="match status" value="1"/>
</dbReference>
<dbReference type="Gene3D" id="2.170.8.10">
    <property type="entry name" value="Phosphoenolpyruvate Carboxykinase, domain 2"/>
    <property type="match status" value="1"/>
</dbReference>
<dbReference type="HAMAP" id="MF_00453">
    <property type="entry name" value="PEPCK_ATP"/>
    <property type="match status" value="1"/>
</dbReference>
<dbReference type="InterPro" id="IPR001272">
    <property type="entry name" value="PEP_carboxykinase_ATP"/>
</dbReference>
<dbReference type="InterPro" id="IPR013035">
    <property type="entry name" value="PEP_carboxykinase_C"/>
</dbReference>
<dbReference type="InterPro" id="IPR008210">
    <property type="entry name" value="PEP_carboxykinase_N"/>
</dbReference>
<dbReference type="InterPro" id="IPR015994">
    <property type="entry name" value="PEPCK_ATP_CS"/>
</dbReference>
<dbReference type="NCBIfam" id="TIGR00224">
    <property type="entry name" value="pckA"/>
    <property type="match status" value="1"/>
</dbReference>
<dbReference type="NCBIfam" id="NF006820">
    <property type="entry name" value="PRK09344.1-2"/>
    <property type="match status" value="1"/>
</dbReference>
<dbReference type="NCBIfam" id="NF006821">
    <property type="entry name" value="PRK09344.1-3"/>
    <property type="match status" value="1"/>
</dbReference>
<dbReference type="NCBIfam" id="NF006823">
    <property type="entry name" value="PRK09344.1-5"/>
    <property type="match status" value="1"/>
</dbReference>
<dbReference type="PANTHER" id="PTHR30031:SF0">
    <property type="entry name" value="PHOSPHOENOLPYRUVATE CARBOXYKINASE (ATP)"/>
    <property type="match status" value="1"/>
</dbReference>
<dbReference type="PANTHER" id="PTHR30031">
    <property type="entry name" value="PHOSPHOENOLPYRUVATE CARBOXYKINASE ATP"/>
    <property type="match status" value="1"/>
</dbReference>
<dbReference type="Pfam" id="PF01293">
    <property type="entry name" value="PEPCK_ATP"/>
    <property type="match status" value="1"/>
</dbReference>
<dbReference type="PIRSF" id="PIRSF006294">
    <property type="entry name" value="PEP_crbxkin"/>
    <property type="match status" value="1"/>
</dbReference>
<dbReference type="SUPFAM" id="SSF68923">
    <property type="entry name" value="PEP carboxykinase N-terminal domain"/>
    <property type="match status" value="1"/>
</dbReference>
<dbReference type="SUPFAM" id="SSF53795">
    <property type="entry name" value="PEP carboxykinase-like"/>
    <property type="match status" value="1"/>
</dbReference>
<dbReference type="PROSITE" id="PS00532">
    <property type="entry name" value="PEPCK_ATP"/>
    <property type="match status" value="1"/>
</dbReference>
<comment type="function">
    <text evidence="1">Involved in the gluconeogenesis. Catalyzes the conversion of oxaloacetate (OAA) to phosphoenolpyruvate (PEP) through direct phosphoryl transfer between the nucleoside triphosphate and OAA.</text>
</comment>
<comment type="catalytic activity">
    <reaction evidence="1">
        <text>oxaloacetate + ATP = phosphoenolpyruvate + ADP + CO2</text>
        <dbReference type="Rhea" id="RHEA:18617"/>
        <dbReference type="ChEBI" id="CHEBI:16452"/>
        <dbReference type="ChEBI" id="CHEBI:16526"/>
        <dbReference type="ChEBI" id="CHEBI:30616"/>
        <dbReference type="ChEBI" id="CHEBI:58702"/>
        <dbReference type="ChEBI" id="CHEBI:456216"/>
        <dbReference type="EC" id="4.1.1.49"/>
    </reaction>
</comment>
<comment type="cofactor">
    <cofactor evidence="1">
        <name>Mn(2+)</name>
        <dbReference type="ChEBI" id="CHEBI:29035"/>
    </cofactor>
    <text evidence="1">Binds 1 Mn(2+) ion per subunit.</text>
</comment>
<comment type="pathway">
    <text evidence="1">Carbohydrate biosynthesis; gluconeogenesis.</text>
</comment>
<comment type="subunit">
    <text evidence="1">Monomer.</text>
</comment>
<comment type="subcellular location">
    <subcellularLocation>
        <location evidence="1">Cytoplasm</location>
    </subcellularLocation>
</comment>
<comment type="similarity">
    <text evidence="1">Belongs to the phosphoenolpyruvate carboxykinase (ATP) family.</text>
</comment>
<feature type="chain" id="PRO_1000026357" description="Phosphoenolpyruvate carboxykinase (ATP)">
    <location>
        <begin position="1"/>
        <end position="513"/>
    </location>
</feature>
<feature type="binding site" evidence="1">
    <location>
        <position position="45"/>
    </location>
    <ligand>
        <name>substrate</name>
    </ligand>
</feature>
<feature type="binding site" evidence="1">
    <location>
        <position position="179"/>
    </location>
    <ligand>
        <name>substrate</name>
    </ligand>
</feature>
<feature type="binding site" evidence="1">
    <location>
        <position position="185"/>
    </location>
    <ligand>
        <name>ATP</name>
        <dbReference type="ChEBI" id="CHEBI:30616"/>
    </ligand>
</feature>
<feature type="binding site" evidence="1">
    <location>
        <position position="185"/>
    </location>
    <ligand>
        <name>Mn(2+)</name>
        <dbReference type="ChEBI" id="CHEBI:29035"/>
    </ligand>
</feature>
<feature type="binding site" evidence="1">
    <location>
        <position position="185"/>
    </location>
    <ligand>
        <name>substrate</name>
    </ligand>
</feature>
<feature type="binding site" evidence="1">
    <location>
        <position position="204"/>
    </location>
    <ligand>
        <name>ATP</name>
        <dbReference type="ChEBI" id="CHEBI:30616"/>
    </ligand>
</feature>
<feature type="binding site" evidence="1">
    <location>
        <position position="204"/>
    </location>
    <ligand>
        <name>Mn(2+)</name>
        <dbReference type="ChEBI" id="CHEBI:29035"/>
    </ligand>
</feature>
<feature type="binding site" evidence="1">
    <location>
        <begin position="220"/>
        <end position="228"/>
    </location>
    <ligand>
        <name>ATP</name>
        <dbReference type="ChEBI" id="CHEBI:30616"/>
    </ligand>
</feature>
<feature type="binding site" evidence="1">
    <location>
        <position position="241"/>
    </location>
    <ligand>
        <name>Mn(2+)</name>
        <dbReference type="ChEBI" id="CHEBI:29035"/>
    </ligand>
</feature>
<feature type="binding site" evidence="1">
    <location>
        <position position="269"/>
    </location>
    <ligand>
        <name>ATP</name>
        <dbReference type="ChEBI" id="CHEBI:30616"/>
    </ligand>
</feature>
<feature type="binding site" evidence="1">
    <location>
        <position position="305"/>
    </location>
    <ligand>
        <name>ATP</name>
        <dbReference type="ChEBI" id="CHEBI:30616"/>
    </ligand>
</feature>
<feature type="binding site" evidence="1">
    <location>
        <position position="305"/>
    </location>
    <ligand>
        <name>substrate</name>
    </ligand>
</feature>
<feature type="binding site" evidence="1">
    <location>
        <position position="431"/>
    </location>
    <ligand>
        <name>ATP</name>
        <dbReference type="ChEBI" id="CHEBI:30616"/>
    </ligand>
</feature>
<name>PCKA_SHESM</name>
<organism>
    <name type="scientific">Shewanella sp. (strain MR-4)</name>
    <dbReference type="NCBI Taxonomy" id="60480"/>
    <lineage>
        <taxon>Bacteria</taxon>
        <taxon>Pseudomonadati</taxon>
        <taxon>Pseudomonadota</taxon>
        <taxon>Gammaproteobacteria</taxon>
        <taxon>Alteromonadales</taxon>
        <taxon>Shewanellaceae</taxon>
        <taxon>Shewanella</taxon>
    </lineage>
</organism>
<keyword id="KW-0067">ATP-binding</keyword>
<keyword id="KW-0963">Cytoplasm</keyword>
<keyword id="KW-0210">Decarboxylase</keyword>
<keyword id="KW-0312">Gluconeogenesis</keyword>
<keyword id="KW-0456">Lyase</keyword>
<keyword id="KW-0464">Manganese</keyword>
<keyword id="KW-0479">Metal-binding</keyword>
<keyword id="KW-0547">Nucleotide-binding</keyword>
<gene>
    <name evidence="1" type="primary">pckA</name>
    <name type="ordered locus">Shewmr4_0152</name>
</gene>
<sequence length="513" mass="55922">MADGLNRVHYNPSTAQLVEFALLRGEGELTANGALVAKTGTRTGRSPGDRFIVKEPSSAADIEWGPVNQAFEPGAFEGLWARVEAFLADKELFVSDLEVGADPEHYQPVRVTTQYAWHQLFARNLFIIPEEFNRQDKPVWQIINAPDFVCVPERDGTNSDAAVILNFAERKVLLAGLKYAGEMKKSMFSVQNFLLPAQGVLPMHCSANVGKDGDTTLFFGLSGTGKTTLSADPKRFLIGDDEHGWAPGGVFNIEGGCYAKCIDLSQKNEPVIWDAIRFGTVLENVVMDEHRVPNYKDSSLTENTRAAYPLEHIAQRKEDNRGAEPHAVVFLTCDVSGVLPPVSILSKEQAAYHFLSGYTAKVGSTEIGSTSAIQSTFSTCFGAPFFPRPAGVYAELLMKRIESFGSQVYLVNTGWTGGPHGIGKRFDIPTTRAIVDAIVSGELKNAETVHLDTLNLAVPVAVPGVDTNLLNPVNTWSDKALYAEYAQKLAEAFTKNFAKYQVSDAIRNAGPKA</sequence>
<protein>
    <recommendedName>
        <fullName evidence="1">Phosphoenolpyruvate carboxykinase (ATP)</fullName>
        <shortName evidence="1">PCK</shortName>
        <shortName evidence="1">PEP carboxykinase</shortName>
        <shortName evidence="1">PEPCK</shortName>
        <ecNumber evidence="1">4.1.1.49</ecNumber>
    </recommendedName>
</protein>
<accession>Q0HNY4</accession>
<reference key="1">
    <citation type="submission" date="2006-08" db="EMBL/GenBank/DDBJ databases">
        <title>Complete sequence of Shewanella sp. MR-4.</title>
        <authorList>
            <consortium name="US DOE Joint Genome Institute"/>
            <person name="Copeland A."/>
            <person name="Lucas S."/>
            <person name="Lapidus A."/>
            <person name="Barry K."/>
            <person name="Detter J.C."/>
            <person name="Glavina del Rio T."/>
            <person name="Hammon N."/>
            <person name="Israni S."/>
            <person name="Dalin E."/>
            <person name="Tice H."/>
            <person name="Pitluck S."/>
            <person name="Kiss H."/>
            <person name="Brettin T."/>
            <person name="Bruce D."/>
            <person name="Han C."/>
            <person name="Tapia R."/>
            <person name="Gilna P."/>
            <person name="Schmutz J."/>
            <person name="Larimer F."/>
            <person name="Land M."/>
            <person name="Hauser L."/>
            <person name="Kyrpides N."/>
            <person name="Mikhailova N."/>
            <person name="Nealson K."/>
            <person name="Konstantinidis K."/>
            <person name="Klappenbach J."/>
            <person name="Tiedje J."/>
            <person name="Richardson P."/>
        </authorList>
    </citation>
    <scope>NUCLEOTIDE SEQUENCE [LARGE SCALE GENOMIC DNA]</scope>
    <source>
        <strain>MR-4</strain>
    </source>
</reference>